<protein>
    <recommendedName>
        <fullName>Putative uncharacterized transmembrane protein DDB_G0286087</fullName>
    </recommendedName>
</protein>
<evidence type="ECO:0000255" key="1"/>
<evidence type="ECO:0000256" key="2">
    <source>
        <dbReference type="SAM" id="MobiDB-lite"/>
    </source>
</evidence>
<evidence type="ECO:0000305" key="3"/>
<reference key="1">
    <citation type="journal article" date="2005" name="Nature">
        <title>The genome of the social amoeba Dictyostelium discoideum.</title>
        <authorList>
            <person name="Eichinger L."/>
            <person name="Pachebat J.A."/>
            <person name="Gloeckner G."/>
            <person name="Rajandream M.A."/>
            <person name="Sucgang R."/>
            <person name="Berriman M."/>
            <person name="Song J."/>
            <person name="Olsen R."/>
            <person name="Szafranski K."/>
            <person name="Xu Q."/>
            <person name="Tunggal B."/>
            <person name="Kummerfeld S."/>
            <person name="Madera M."/>
            <person name="Konfortov B.A."/>
            <person name="Rivero F."/>
            <person name="Bankier A.T."/>
            <person name="Lehmann R."/>
            <person name="Hamlin N."/>
            <person name="Davies R."/>
            <person name="Gaudet P."/>
            <person name="Fey P."/>
            <person name="Pilcher K."/>
            <person name="Chen G."/>
            <person name="Saunders D."/>
            <person name="Sodergren E.J."/>
            <person name="Davis P."/>
            <person name="Kerhornou A."/>
            <person name="Nie X."/>
            <person name="Hall N."/>
            <person name="Anjard C."/>
            <person name="Hemphill L."/>
            <person name="Bason N."/>
            <person name="Farbrother P."/>
            <person name="Desany B."/>
            <person name="Just E."/>
            <person name="Morio T."/>
            <person name="Rost R."/>
            <person name="Churcher C.M."/>
            <person name="Cooper J."/>
            <person name="Haydock S."/>
            <person name="van Driessche N."/>
            <person name="Cronin A."/>
            <person name="Goodhead I."/>
            <person name="Muzny D.M."/>
            <person name="Mourier T."/>
            <person name="Pain A."/>
            <person name="Lu M."/>
            <person name="Harper D."/>
            <person name="Lindsay R."/>
            <person name="Hauser H."/>
            <person name="James K.D."/>
            <person name="Quiles M."/>
            <person name="Madan Babu M."/>
            <person name="Saito T."/>
            <person name="Buchrieser C."/>
            <person name="Wardroper A."/>
            <person name="Felder M."/>
            <person name="Thangavelu M."/>
            <person name="Johnson D."/>
            <person name="Knights A."/>
            <person name="Loulseged H."/>
            <person name="Mungall K.L."/>
            <person name="Oliver K."/>
            <person name="Price C."/>
            <person name="Quail M.A."/>
            <person name="Urushihara H."/>
            <person name="Hernandez J."/>
            <person name="Rabbinowitsch E."/>
            <person name="Steffen D."/>
            <person name="Sanders M."/>
            <person name="Ma J."/>
            <person name="Kohara Y."/>
            <person name="Sharp S."/>
            <person name="Simmonds M.N."/>
            <person name="Spiegler S."/>
            <person name="Tivey A."/>
            <person name="Sugano S."/>
            <person name="White B."/>
            <person name="Walker D."/>
            <person name="Woodward J.R."/>
            <person name="Winckler T."/>
            <person name="Tanaka Y."/>
            <person name="Shaulsky G."/>
            <person name="Schleicher M."/>
            <person name="Weinstock G.M."/>
            <person name="Rosenthal A."/>
            <person name="Cox E.C."/>
            <person name="Chisholm R.L."/>
            <person name="Gibbs R.A."/>
            <person name="Loomis W.F."/>
            <person name="Platzer M."/>
            <person name="Kay R.R."/>
            <person name="Williams J.G."/>
            <person name="Dear P.H."/>
            <person name="Noegel A.A."/>
            <person name="Barrell B.G."/>
            <person name="Kuspa A."/>
        </authorList>
    </citation>
    <scope>NUCLEOTIDE SEQUENCE [LARGE SCALE GENOMIC DNA]</scope>
    <source>
        <strain>AX4</strain>
    </source>
</reference>
<organism>
    <name type="scientific">Dictyostelium discoideum</name>
    <name type="common">Social amoeba</name>
    <dbReference type="NCBI Taxonomy" id="44689"/>
    <lineage>
        <taxon>Eukaryota</taxon>
        <taxon>Amoebozoa</taxon>
        <taxon>Evosea</taxon>
        <taxon>Eumycetozoa</taxon>
        <taxon>Dictyostelia</taxon>
        <taxon>Dictyosteliales</taxon>
        <taxon>Dictyosteliaceae</taxon>
        <taxon>Dictyostelium</taxon>
    </lineage>
</organism>
<name>Y6810_DICDI</name>
<comment type="subcellular location">
    <subcellularLocation>
        <location evidence="3">Membrane</location>
        <topology evidence="3">Single-pass membrane protein</topology>
    </subcellularLocation>
</comment>
<accession>Q54MA0</accession>
<dbReference type="EMBL" id="AAFI02000085">
    <property type="protein sequence ID" value="EAL64422.1"/>
    <property type="molecule type" value="Genomic_DNA"/>
</dbReference>
<dbReference type="RefSeq" id="XP_637934.1">
    <property type="nucleotide sequence ID" value="XM_632842.1"/>
</dbReference>
<dbReference type="PaxDb" id="44689-DDB0186810"/>
<dbReference type="EnsemblProtists" id="EAL64422">
    <property type="protein sequence ID" value="EAL64422"/>
    <property type="gene ID" value="DDB_G0286087"/>
</dbReference>
<dbReference type="GeneID" id="8625445"/>
<dbReference type="KEGG" id="ddi:DDB_G0286087"/>
<dbReference type="dictyBase" id="DDB_G0286087"/>
<dbReference type="HOGENOM" id="CLU_2908775_0_0_1"/>
<dbReference type="InParanoid" id="Q54MA0"/>
<dbReference type="PRO" id="PR:Q54MA0"/>
<dbReference type="Proteomes" id="UP000002195">
    <property type="component" value="Chromosome 4"/>
</dbReference>
<dbReference type="GO" id="GO:0016020">
    <property type="term" value="C:membrane"/>
    <property type="evidence" value="ECO:0007669"/>
    <property type="project" value="UniProtKB-SubCell"/>
</dbReference>
<proteinExistence type="predicted"/>
<feature type="chain" id="PRO_0000348500" description="Putative uncharacterized transmembrane protein DDB_G0286087">
    <location>
        <begin position="1"/>
        <end position="62"/>
    </location>
</feature>
<feature type="transmembrane region" description="Helical" evidence="1">
    <location>
        <begin position="15"/>
        <end position="37"/>
    </location>
</feature>
<feature type="region of interest" description="Disordered" evidence="2">
    <location>
        <begin position="41"/>
        <end position="62"/>
    </location>
</feature>
<feature type="compositionally biased region" description="Low complexity" evidence="2">
    <location>
        <begin position="41"/>
        <end position="56"/>
    </location>
</feature>
<keyword id="KW-0472">Membrane</keyword>
<keyword id="KW-1185">Reference proteome</keyword>
<keyword id="KW-0812">Transmembrane</keyword>
<keyword id="KW-1133">Transmembrane helix</keyword>
<gene>
    <name type="ORF">DDB_G0286087</name>
</gene>
<sequence>MAIHDANYIVSTSEFSSGVLISNFLLFNFIIISHSSLLSNTTTTTTTTTTTTNTKSTLHRSG</sequence>